<reference key="1">
    <citation type="journal article" date="2006" name="Genome Res.">
        <title>Skewed genomic variability in strains of the toxigenic bacterial pathogen, Clostridium perfringens.</title>
        <authorList>
            <person name="Myers G.S.A."/>
            <person name="Rasko D.A."/>
            <person name="Cheung J.K."/>
            <person name="Ravel J."/>
            <person name="Seshadri R."/>
            <person name="DeBoy R.T."/>
            <person name="Ren Q."/>
            <person name="Varga J."/>
            <person name="Awad M.M."/>
            <person name="Brinkac L.M."/>
            <person name="Daugherty S.C."/>
            <person name="Haft D.H."/>
            <person name="Dodson R.J."/>
            <person name="Madupu R."/>
            <person name="Nelson W.C."/>
            <person name="Rosovitz M.J."/>
            <person name="Sullivan S.A."/>
            <person name="Khouri H."/>
            <person name="Dimitrov G.I."/>
            <person name="Watkins K.L."/>
            <person name="Mulligan S."/>
            <person name="Benton J."/>
            <person name="Radune D."/>
            <person name="Fisher D.J."/>
            <person name="Atkins H.S."/>
            <person name="Hiscox T."/>
            <person name="Jost B.H."/>
            <person name="Billington S.J."/>
            <person name="Songer J.G."/>
            <person name="McClane B.A."/>
            <person name="Titball R.W."/>
            <person name="Rood J.I."/>
            <person name="Melville S.B."/>
            <person name="Paulsen I.T."/>
        </authorList>
    </citation>
    <scope>NUCLEOTIDE SEQUENCE [LARGE SCALE GENOMIC DNA]</scope>
    <source>
        <strain>SM101 / Type A</strain>
    </source>
</reference>
<keyword id="KW-1003">Cell membrane</keyword>
<keyword id="KW-0472">Membrane</keyword>
<proteinExistence type="inferred from homology"/>
<dbReference type="EMBL" id="CP000312">
    <property type="protein sequence ID" value="ABG85613.1"/>
    <property type="molecule type" value="Genomic_DNA"/>
</dbReference>
<dbReference type="KEGG" id="cpr:CPR_2672"/>
<dbReference type="BioCyc" id="CPER289380:GI76-2689-MONOMER"/>
<dbReference type="Proteomes" id="UP000001824">
    <property type="component" value="Chromosome"/>
</dbReference>
<dbReference type="GO" id="GO:0005886">
    <property type="term" value="C:plasma membrane"/>
    <property type="evidence" value="ECO:0007669"/>
    <property type="project" value="UniProtKB-SubCell"/>
</dbReference>
<dbReference type="HAMAP" id="MF_00386">
    <property type="entry name" value="UPF0161_YidD"/>
    <property type="match status" value="1"/>
</dbReference>
<dbReference type="InterPro" id="IPR002696">
    <property type="entry name" value="Membr_insert_effic_factor_YidD"/>
</dbReference>
<dbReference type="NCBIfam" id="TIGR00278">
    <property type="entry name" value="membrane protein insertion efficiency factor YidD"/>
    <property type="match status" value="1"/>
</dbReference>
<dbReference type="PANTHER" id="PTHR33383">
    <property type="entry name" value="MEMBRANE PROTEIN INSERTION EFFICIENCY FACTOR-RELATED"/>
    <property type="match status" value="1"/>
</dbReference>
<dbReference type="PANTHER" id="PTHR33383:SF1">
    <property type="entry name" value="MEMBRANE PROTEIN INSERTION EFFICIENCY FACTOR-RELATED"/>
    <property type="match status" value="1"/>
</dbReference>
<dbReference type="Pfam" id="PF01809">
    <property type="entry name" value="YidD"/>
    <property type="match status" value="1"/>
</dbReference>
<dbReference type="SMART" id="SM01234">
    <property type="entry name" value="Haemolytic"/>
    <property type="match status" value="1"/>
</dbReference>
<feature type="chain" id="PRO_1000013086" description="Putative membrane protein insertion efficiency factor">
    <location>
        <begin position="1"/>
        <end position="69"/>
    </location>
</feature>
<gene>
    <name type="ordered locus">CPR_2672</name>
</gene>
<evidence type="ECO:0000255" key="1">
    <source>
        <dbReference type="HAMAP-Rule" id="MF_00386"/>
    </source>
</evidence>
<organism>
    <name type="scientific">Clostridium perfringens (strain SM101 / Type A)</name>
    <dbReference type="NCBI Taxonomy" id="289380"/>
    <lineage>
        <taxon>Bacteria</taxon>
        <taxon>Bacillati</taxon>
        <taxon>Bacillota</taxon>
        <taxon>Clostridia</taxon>
        <taxon>Eubacteriales</taxon>
        <taxon>Clostridiaceae</taxon>
        <taxon>Clostridium</taxon>
    </lineage>
</organism>
<protein>
    <recommendedName>
        <fullName evidence="1">Putative membrane protein insertion efficiency factor</fullName>
    </recommendedName>
</protein>
<comment type="function">
    <text evidence="1">Could be involved in insertion of integral membrane proteins into the membrane.</text>
</comment>
<comment type="subcellular location">
    <subcellularLocation>
        <location evidence="1">Cell membrane</location>
        <topology evidence="1">Peripheral membrane protein</topology>
        <orientation evidence="1">Cytoplasmic side</orientation>
    </subcellularLocation>
</comment>
<comment type="similarity">
    <text evidence="1">Belongs to the UPF0161 family.</text>
</comment>
<sequence>MKKLFIVMIKFYRKYISPLKRPCCRFYPTCSQYALEAIQKYGAFKGGFMSIGRILRCNPFCKGGYDPVK</sequence>
<name>YIDD_CLOPS</name>
<accession>Q0SPQ0</accession>